<proteinExistence type="inferred from homology"/>
<name>Y1203_STAA2</name>
<sequence>MNLIPRTSIVVYLKHMKHERQIRKYGHIVHSNRDRKFVIMYVNEQDVDQIVHKLMQLKYVRHIDGSPYKYLKKTYEKEKHEIYN</sequence>
<keyword id="KW-0963">Cytoplasm</keyword>
<comment type="subcellular location">
    <subcellularLocation>
        <location evidence="1">Cytoplasm</location>
    </subcellularLocation>
</comment>
<comment type="similarity">
    <text evidence="1">Belongs to the UPF0298 family.</text>
</comment>
<dbReference type="EMBL" id="CP000736">
    <property type="protein sequence ID" value="ABR52057.1"/>
    <property type="molecule type" value="Genomic_DNA"/>
</dbReference>
<dbReference type="SMR" id="A6U0T9"/>
<dbReference type="KEGG" id="sah:SaurJH1_1203"/>
<dbReference type="HOGENOM" id="CLU_159890_2_1_9"/>
<dbReference type="GO" id="GO:0005737">
    <property type="term" value="C:cytoplasm"/>
    <property type="evidence" value="ECO:0007669"/>
    <property type="project" value="UniProtKB-SubCell"/>
</dbReference>
<dbReference type="HAMAP" id="MF_01126">
    <property type="entry name" value="UPF0298"/>
    <property type="match status" value="1"/>
</dbReference>
<dbReference type="InterPro" id="IPR016979">
    <property type="entry name" value="DUF2129"/>
</dbReference>
<dbReference type="Pfam" id="PF09902">
    <property type="entry name" value="DUF2129"/>
    <property type="match status" value="1"/>
</dbReference>
<dbReference type="PIRSF" id="PIRSF031653">
    <property type="entry name" value="UCP031653"/>
    <property type="match status" value="1"/>
</dbReference>
<accession>A6U0T9</accession>
<evidence type="ECO:0000255" key="1">
    <source>
        <dbReference type="HAMAP-Rule" id="MF_01126"/>
    </source>
</evidence>
<reference key="1">
    <citation type="submission" date="2007-06" db="EMBL/GenBank/DDBJ databases">
        <title>Complete sequence of chromosome of Staphylococcus aureus subsp. aureus JH1.</title>
        <authorList>
            <consortium name="US DOE Joint Genome Institute"/>
            <person name="Copeland A."/>
            <person name="Lucas S."/>
            <person name="Lapidus A."/>
            <person name="Barry K."/>
            <person name="Detter J.C."/>
            <person name="Glavina del Rio T."/>
            <person name="Hammon N."/>
            <person name="Israni S."/>
            <person name="Dalin E."/>
            <person name="Tice H."/>
            <person name="Pitluck S."/>
            <person name="Chain P."/>
            <person name="Malfatti S."/>
            <person name="Shin M."/>
            <person name="Vergez L."/>
            <person name="Schmutz J."/>
            <person name="Larimer F."/>
            <person name="Land M."/>
            <person name="Hauser L."/>
            <person name="Kyrpides N."/>
            <person name="Ivanova N."/>
            <person name="Tomasz A."/>
            <person name="Richardson P."/>
        </authorList>
    </citation>
    <scope>NUCLEOTIDE SEQUENCE [LARGE SCALE GENOMIC DNA]</scope>
    <source>
        <strain>JH1</strain>
    </source>
</reference>
<protein>
    <recommendedName>
        <fullName evidence="1">UPF0298 protein SaurJH1_1203</fullName>
    </recommendedName>
</protein>
<gene>
    <name type="ordered locus">SaurJH1_1203</name>
</gene>
<organism>
    <name type="scientific">Staphylococcus aureus (strain JH1)</name>
    <dbReference type="NCBI Taxonomy" id="359787"/>
    <lineage>
        <taxon>Bacteria</taxon>
        <taxon>Bacillati</taxon>
        <taxon>Bacillota</taxon>
        <taxon>Bacilli</taxon>
        <taxon>Bacillales</taxon>
        <taxon>Staphylococcaceae</taxon>
        <taxon>Staphylococcus</taxon>
    </lineage>
</organism>
<feature type="chain" id="PRO_1000085015" description="UPF0298 protein SaurJH1_1203">
    <location>
        <begin position="1"/>
        <end position="84"/>
    </location>
</feature>